<comment type="function">
    <text evidence="1">S-adenosyl-L-methionine-dependent methyltransferase that catalyzes the trimethylation of the amino group of the modified target histidine residue in translation elongation factor 2 (EF-2), to form an intermediate called diphthine. The three successive methylation reactions represent the second step of diphthamide biosynthesis.</text>
</comment>
<comment type="catalytic activity">
    <reaction evidence="1">
        <text>2-[(3S)-amino-3-carboxypropyl]-L-histidyl-[translation elongation factor 2] + 3 S-adenosyl-L-methionine = diphthine-[translation elongation factor 2] + 3 S-adenosyl-L-homocysteine + 3 H(+)</text>
        <dbReference type="Rhea" id="RHEA:36415"/>
        <dbReference type="Rhea" id="RHEA-COMP:9749"/>
        <dbReference type="Rhea" id="RHEA-COMP:10172"/>
        <dbReference type="ChEBI" id="CHEBI:15378"/>
        <dbReference type="ChEBI" id="CHEBI:57856"/>
        <dbReference type="ChEBI" id="CHEBI:59789"/>
        <dbReference type="ChEBI" id="CHEBI:73995"/>
        <dbReference type="ChEBI" id="CHEBI:82696"/>
        <dbReference type="EC" id="2.1.1.98"/>
    </reaction>
</comment>
<comment type="pathway">
    <text evidence="1">Protein modification; peptidyl-diphthamide biosynthesis.</text>
</comment>
<comment type="subunit">
    <text evidence="1">Homodimer.</text>
</comment>
<comment type="similarity">
    <text evidence="1">Belongs to the diphthine synthase family.</text>
</comment>
<organism>
    <name type="scientific">Methanosphaerula palustris (strain ATCC BAA-1556 / DSM 19958 / E1-9c)</name>
    <dbReference type="NCBI Taxonomy" id="521011"/>
    <lineage>
        <taxon>Archaea</taxon>
        <taxon>Methanobacteriati</taxon>
        <taxon>Methanobacteriota</taxon>
        <taxon>Stenosarchaea group</taxon>
        <taxon>Methanomicrobia</taxon>
        <taxon>Methanomicrobiales</taxon>
        <taxon>Methanoregulaceae</taxon>
        <taxon>Methanosphaerula</taxon>
    </lineage>
</organism>
<sequence>MLTFVGLGLYDAGDISVKGLEAVRASDAVFLEYYTSRLMGTTIEDLVRAYGKEVIVLARADVEQHPEPILDAAAAGDVVVLTGGDPMVSTTHMDLRLRAAARGIPTGIIHGASIQTAVCGLTGLQNYRFGKSCSVPFPQKNWFPLTPYEVVRQNLAADLHTLVYLDIQQDRYMRVGEAIDLLEEMAVRVGGSITTYIGVARAGSVSPVVRAGTADHLRGIDFGGPLHVLIVPATLHPVEQEYLEVFAGLSV</sequence>
<gene>
    <name evidence="1" type="primary">dphB</name>
    <name type="ordered locus">Mpal_0116</name>
</gene>
<evidence type="ECO:0000255" key="1">
    <source>
        <dbReference type="HAMAP-Rule" id="MF_01084"/>
    </source>
</evidence>
<name>DPHB_METPE</name>
<proteinExistence type="inferred from homology"/>
<reference key="1">
    <citation type="journal article" date="2015" name="Genome Announc.">
        <title>Complete Genome Sequence of Methanosphaerula palustris E1-9CT, a Hydrogenotrophic Methanogen Isolated from a Minerotrophic Fen Peatland.</title>
        <authorList>
            <person name="Cadillo-Quiroz H."/>
            <person name="Browne P."/>
            <person name="Kyrpides N."/>
            <person name="Woyke T."/>
            <person name="Goodwin L."/>
            <person name="Detter C."/>
            <person name="Yavitt J.B."/>
            <person name="Zinder S.H."/>
        </authorList>
    </citation>
    <scope>NUCLEOTIDE SEQUENCE [LARGE SCALE GENOMIC DNA]</scope>
    <source>
        <strain>ATCC BAA-1556 / DSM 19958 / E1-9c</strain>
    </source>
</reference>
<keyword id="KW-0489">Methyltransferase</keyword>
<keyword id="KW-1185">Reference proteome</keyword>
<keyword id="KW-0949">S-adenosyl-L-methionine</keyword>
<keyword id="KW-0808">Transferase</keyword>
<protein>
    <recommendedName>
        <fullName evidence="1">Diphthine synthase</fullName>
        <ecNumber evidence="1">2.1.1.98</ecNumber>
    </recommendedName>
    <alternativeName>
        <fullName evidence="1">Diphthamide biosynthesis methyltransferase</fullName>
    </alternativeName>
</protein>
<dbReference type="EC" id="2.1.1.98" evidence="1"/>
<dbReference type="EMBL" id="CP001338">
    <property type="protein sequence ID" value="ACL15509.1"/>
    <property type="molecule type" value="Genomic_DNA"/>
</dbReference>
<dbReference type="RefSeq" id="WP_012616828.1">
    <property type="nucleotide sequence ID" value="NC_011832.1"/>
</dbReference>
<dbReference type="SMR" id="B8GIF8"/>
<dbReference type="STRING" id="521011.Mpal_0116"/>
<dbReference type="GeneID" id="7272286"/>
<dbReference type="KEGG" id="mpl:Mpal_0116"/>
<dbReference type="eggNOG" id="arCOG04161">
    <property type="taxonomic scope" value="Archaea"/>
</dbReference>
<dbReference type="HOGENOM" id="CLU_066040_0_0_2"/>
<dbReference type="OrthoDB" id="39139at2157"/>
<dbReference type="UniPathway" id="UPA00559"/>
<dbReference type="Proteomes" id="UP000002457">
    <property type="component" value="Chromosome"/>
</dbReference>
<dbReference type="GO" id="GO:0004164">
    <property type="term" value="F:diphthine synthase activity"/>
    <property type="evidence" value="ECO:0007669"/>
    <property type="project" value="UniProtKB-UniRule"/>
</dbReference>
<dbReference type="GO" id="GO:0032259">
    <property type="term" value="P:methylation"/>
    <property type="evidence" value="ECO:0007669"/>
    <property type="project" value="UniProtKB-KW"/>
</dbReference>
<dbReference type="GO" id="GO:0017183">
    <property type="term" value="P:protein histidyl modification to diphthamide"/>
    <property type="evidence" value="ECO:0007669"/>
    <property type="project" value="UniProtKB-UniRule"/>
</dbReference>
<dbReference type="CDD" id="cd11647">
    <property type="entry name" value="DHP5_DphB"/>
    <property type="match status" value="1"/>
</dbReference>
<dbReference type="Gene3D" id="3.40.1010.10">
    <property type="entry name" value="Cobalt-precorrin-4 Transmethylase, Domain 1"/>
    <property type="match status" value="1"/>
</dbReference>
<dbReference type="Gene3D" id="3.30.950.10">
    <property type="entry name" value="Methyltransferase, Cobalt-precorrin-4 Transmethylase, Domain 2"/>
    <property type="match status" value="1"/>
</dbReference>
<dbReference type="HAMAP" id="MF_01084">
    <property type="entry name" value="Diphthine_synth"/>
    <property type="match status" value="1"/>
</dbReference>
<dbReference type="InterPro" id="IPR000878">
    <property type="entry name" value="4pyrrol_Mease"/>
</dbReference>
<dbReference type="InterPro" id="IPR035996">
    <property type="entry name" value="4pyrrol_Methylase_sf"/>
</dbReference>
<dbReference type="InterPro" id="IPR014777">
    <property type="entry name" value="4pyrrole_Mease_sub1"/>
</dbReference>
<dbReference type="InterPro" id="IPR014776">
    <property type="entry name" value="4pyrrole_Mease_sub2"/>
</dbReference>
<dbReference type="InterPro" id="IPR004551">
    <property type="entry name" value="Dphthn_synthase"/>
</dbReference>
<dbReference type="NCBIfam" id="TIGR00522">
    <property type="entry name" value="dph5"/>
    <property type="match status" value="1"/>
</dbReference>
<dbReference type="PANTHER" id="PTHR10882:SF0">
    <property type="entry name" value="DIPHTHINE METHYL ESTER SYNTHASE"/>
    <property type="match status" value="1"/>
</dbReference>
<dbReference type="PANTHER" id="PTHR10882">
    <property type="entry name" value="DIPHTHINE SYNTHASE"/>
    <property type="match status" value="1"/>
</dbReference>
<dbReference type="Pfam" id="PF00590">
    <property type="entry name" value="TP_methylase"/>
    <property type="match status" value="1"/>
</dbReference>
<dbReference type="PIRSF" id="PIRSF036432">
    <property type="entry name" value="Diphthine_synth"/>
    <property type="match status" value="1"/>
</dbReference>
<dbReference type="SUPFAM" id="SSF53790">
    <property type="entry name" value="Tetrapyrrole methylase"/>
    <property type="match status" value="1"/>
</dbReference>
<feature type="chain" id="PRO_1000149854" description="Diphthine synthase">
    <location>
        <begin position="1"/>
        <end position="251"/>
    </location>
</feature>
<feature type="binding site" evidence="1">
    <location>
        <position position="9"/>
    </location>
    <ligand>
        <name>S-adenosyl-L-methionine</name>
        <dbReference type="ChEBI" id="CHEBI:59789"/>
    </ligand>
</feature>
<feature type="binding site" evidence="1">
    <location>
        <position position="85"/>
    </location>
    <ligand>
        <name>S-adenosyl-L-methionine</name>
        <dbReference type="ChEBI" id="CHEBI:59789"/>
    </ligand>
</feature>
<feature type="binding site" evidence="1">
    <location>
        <position position="88"/>
    </location>
    <ligand>
        <name>S-adenosyl-L-methionine</name>
        <dbReference type="ChEBI" id="CHEBI:59789"/>
    </ligand>
</feature>
<feature type="binding site" evidence="1">
    <location>
        <begin position="113"/>
        <end position="114"/>
    </location>
    <ligand>
        <name>S-adenosyl-L-methionine</name>
        <dbReference type="ChEBI" id="CHEBI:59789"/>
    </ligand>
</feature>
<feature type="binding site" evidence="1">
    <location>
        <position position="165"/>
    </location>
    <ligand>
        <name>S-adenosyl-L-methionine</name>
        <dbReference type="ChEBI" id="CHEBI:59789"/>
    </ligand>
</feature>
<feature type="binding site" evidence="1">
    <location>
        <position position="202"/>
    </location>
    <ligand>
        <name>S-adenosyl-L-methionine</name>
        <dbReference type="ChEBI" id="CHEBI:59789"/>
    </ligand>
</feature>
<feature type="binding site" evidence="1">
    <location>
        <position position="227"/>
    </location>
    <ligand>
        <name>S-adenosyl-L-methionine</name>
        <dbReference type="ChEBI" id="CHEBI:59789"/>
    </ligand>
</feature>
<accession>B8GIF8</accession>